<accession>B7N474</accession>
<organism>
    <name type="scientific">Escherichia coli O17:K52:H18 (strain UMN026 / ExPEC)</name>
    <dbReference type="NCBI Taxonomy" id="585056"/>
    <lineage>
        <taxon>Bacteria</taxon>
        <taxon>Pseudomonadati</taxon>
        <taxon>Pseudomonadota</taxon>
        <taxon>Gammaproteobacteria</taxon>
        <taxon>Enterobacterales</taxon>
        <taxon>Enterobacteriaceae</taxon>
        <taxon>Escherichia</taxon>
    </lineage>
</organism>
<reference key="1">
    <citation type="journal article" date="2009" name="PLoS Genet.">
        <title>Organised genome dynamics in the Escherichia coli species results in highly diverse adaptive paths.</title>
        <authorList>
            <person name="Touchon M."/>
            <person name="Hoede C."/>
            <person name="Tenaillon O."/>
            <person name="Barbe V."/>
            <person name="Baeriswyl S."/>
            <person name="Bidet P."/>
            <person name="Bingen E."/>
            <person name="Bonacorsi S."/>
            <person name="Bouchier C."/>
            <person name="Bouvet O."/>
            <person name="Calteau A."/>
            <person name="Chiapello H."/>
            <person name="Clermont O."/>
            <person name="Cruveiller S."/>
            <person name="Danchin A."/>
            <person name="Diard M."/>
            <person name="Dossat C."/>
            <person name="Karoui M.E."/>
            <person name="Frapy E."/>
            <person name="Garry L."/>
            <person name="Ghigo J.M."/>
            <person name="Gilles A.M."/>
            <person name="Johnson J."/>
            <person name="Le Bouguenec C."/>
            <person name="Lescat M."/>
            <person name="Mangenot S."/>
            <person name="Martinez-Jehanne V."/>
            <person name="Matic I."/>
            <person name="Nassif X."/>
            <person name="Oztas S."/>
            <person name="Petit M.A."/>
            <person name="Pichon C."/>
            <person name="Rouy Z."/>
            <person name="Ruf C.S."/>
            <person name="Schneider D."/>
            <person name="Tourret J."/>
            <person name="Vacherie B."/>
            <person name="Vallenet D."/>
            <person name="Medigue C."/>
            <person name="Rocha E.P.C."/>
            <person name="Denamur E."/>
        </authorList>
    </citation>
    <scope>NUCLEOTIDE SEQUENCE [LARGE SCALE GENOMIC DNA]</scope>
    <source>
        <strain>UMN026 / ExPEC</strain>
    </source>
</reference>
<gene>
    <name evidence="1" type="primary">trpB</name>
    <name type="ordered locus">ECUMN_1560</name>
</gene>
<comment type="function">
    <text evidence="1">The beta subunit is responsible for the synthesis of L-tryptophan from indole and L-serine.</text>
</comment>
<comment type="catalytic activity">
    <reaction evidence="1">
        <text>(1S,2R)-1-C-(indol-3-yl)glycerol 3-phosphate + L-serine = D-glyceraldehyde 3-phosphate + L-tryptophan + H2O</text>
        <dbReference type="Rhea" id="RHEA:10532"/>
        <dbReference type="ChEBI" id="CHEBI:15377"/>
        <dbReference type="ChEBI" id="CHEBI:33384"/>
        <dbReference type="ChEBI" id="CHEBI:57912"/>
        <dbReference type="ChEBI" id="CHEBI:58866"/>
        <dbReference type="ChEBI" id="CHEBI:59776"/>
        <dbReference type="EC" id="4.2.1.20"/>
    </reaction>
</comment>
<comment type="cofactor">
    <cofactor evidence="1">
        <name>pyridoxal 5'-phosphate</name>
        <dbReference type="ChEBI" id="CHEBI:597326"/>
    </cofactor>
</comment>
<comment type="pathway">
    <text evidence="1">Amino-acid biosynthesis; L-tryptophan biosynthesis; L-tryptophan from chorismate: step 5/5.</text>
</comment>
<comment type="subunit">
    <text evidence="1">Tetramer of two alpha and two beta chains.</text>
</comment>
<comment type="similarity">
    <text evidence="1">Belongs to the TrpB family.</text>
</comment>
<name>TRPB_ECOLU</name>
<proteinExistence type="inferred from homology"/>
<dbReference type="EC" id="4.2.1.20" evidence="1"/>
<dbReference type="EMBL" id="CU928163">
    <property type="protein sequence ID" value="CAR12767.1"/>
    <property type="molecule type" value="Genomic_DNA"/>
</dbReference>
<dbReference type="RefSeq" id="WP_000209502.1">
    <property type="nucleotide sequence ID" value="NC_011751.1"/>
</dbReference>
<dbReference type="RefSeq" id="YP_002412303.1">
    <property type="nucleotide sequence ID" value="NC_011751.1"/>
</dbReference>
<dbReference type="SMR" id="B7N474"/>
<dbReference type="STRING" id="585056.ECUMN_1560"/>
<dbReference type="KEGG" id="eum:ECUMN_1560"/>
<dbReference type="PATRIC" id="fig|585056.7.peg.1756"/>
<dbReference type="HOGENOM" id="CLU_016734_3_1_6"/>
<dbReference type="UniPathway" id="UPA00035">
    <property type="reaction ID" value="UER00044"/>
</dbReference>
<dbReference type="Proteomes" id="UP000007097">
    <property type="component" value="Chromosome"/>
</dbReference>
<dbReference type="GO" id="GO:0005737">
    <property type="term" value="C:cytoplasm"/>
    <property type="evidence" value="ECO:0007669"/>
    <property type="project" value="TreeGrafter"/>
</dbReference>
<dbReference type="GO" id="GO:0004834">
    <property type="term" value="F:tryptophan synthase activity"/>
    <property type="evidence" value="ECO:0007669"/>
    <property type="project" value="UniProtKB-UniRule"/>
</dbReference>
<dbReference type="CDD" id="cd06446">
    <property type="entry name" value="Trp-synth_B"/>
    <property type="match status" value="1"/>
</dbReference>
<dbReference type="FunFam" id="3.40.50.1100:FF:000001">
    <property type="entry name" value="Tryptophan synthase beta chain"/>
    <property type="match status" value="1"/>
</dbReference>
<dbReference type="FunFam" id="3.40.50.1100:FF:000004">
    <property type="entry name" value="Tryptophan synthase beta chain"/>
    <property type="match status" value="1"/>
</dbReference>
<dbReference type="Gene3D" id="3.40.50.1100">
    <property type="match status" value="2"/>
</dbReference>
<dbReference type="HAMAP" id="MF_00133">
    <property type="entry name" value="Trp_synth_beta"/>
    <property type="match status" value="1"/>
</dbReference>
<dbReference type="InterPro" id="IPR006653">
    <property type="entry name" value="Trp_synth_b_CS"/>
</dbReference>
<dbReference type="InterPro" id="IPR006654">
    <property type="entry name" value="Trp_synth_beta"/>
</dbReference>
<dbReference type="InterPro" id="IPR023026">
    <property type="entry name" value="Trp_synth_beta/beta-like"/>
</dbReference>
<dbReference type="InterPro" id="IPR001926">
    <property type="entry name" value="TrpB-like_PALP"/>
</dbReference>
<dbReference type="InterPro" id="IPR036052">
    <property type="entry name" value="TrpB-like_PALP_sf"/>
</dbReference>
<dbReference type="NCBIfam" id="TIGR00263">
    <property type="entry name" value="trpB"/>
    <property type="match status" value="1"/>
</dbReference>
<dbReference type="PANTHER" id="PTHR48077:SF3">
    <property type="entry name" value="TRYPTOPHAN SYNTHASE"/>
    <property type="match status" value="1"/>
</dbReference>
<dbReference type="PANTHER" id="PTHR48077">
    <property type="entry name" value="TRYPTOPHAN SYNTHASE-RELATED"/>
    <property type="match status" value="1"/>
</dbReference>
<dbReference type="Pfam" id="PF00291">
    <property type="entry name" value="PALP"/>
    <property type="match status" value="1"/>
</dbReference>
<dbReference type="PIRSF" id="PIRSF001413">
    <property type="entry name" value="Trp_syn_beta"/>
    <property type="match status" value="1"/>
</dbReference>
<dbReference type="SUPFAM" id="SSF53686">
    <property type="entry name" value="Tryptophan synthase beta subunit-like PLP-dependent enzymes"/>
    <property type="match status" value="1"/>
</dbReference>
<dbReference type="PROSITE" id="PS00168">
    <property type="entry name" value="TRP_SYNTHASE_BETA"/>
    <property type="match status" value="1"/>
</dbReference>
<evidence type="ECO:0000255" key="1">
    <source>
        <dbReference type="HAMAP-Rule" id="MF_00133"/>
    </source>
</evidence>
<keyword id="KW-0028">Amino-acid biosynthesis</keyword>
<keyword id="KW-0057">Aromatic amino acid biosynthesis</keyword>
<keyword id="KW-0456">Lyase</keyword>
<keyword id="KW-0663">Pyridoxal phosphate</keyword>
<keyword id="KW-0822">Tryptophan biosynthesis</keyword>
<sequence>MTTLLNPYFGEFGGMYVPQILMPALRQLEEAFVSAQKDPEFQAQFNDLLKNYAGRPTALTKCQNITAGTNTTLYLKREDLLHGGAHKTNQVLGQALLAKRMGKTEIIAETGAGQHGVASALASALLGLKCRIYMGAKDVERQSPNVFRMHLMGAEVIPVHSGSATLKDACNEALRDWSGSYETAHYMLGTAAGPHPYPTIVREFQRMIGEETKAQILEREGRLPDAVIACVGGGSNAIGMFADFINETDVGLIGVEPGGHGIETGEHGAPLKHGRVGIYFGMKAPMMQTEDGQIEESYSISAGLDFPSVGPQHAYLNSTGRADYVSITDDEALEAFKTLCLHEGIIPALESSHALAHALKMMRENPEKEQLLVVNLSGRGDKDIFTVHDILKARGEI</sequence>
<feature type="chain" id="PRO_1000117756" description="Tryptophan synthase beta chain">
    <location>
        <begin position="1"/>
        <end position="397"/>
    </location>
</feature>
<feature type="modified residue" description="N6-(pyridoxal phosphate)lysine" evidence="1">
    <location>
        <position position="87"/>
    </location>
</feature>
<protein>
    <recommendedName>
        <fullName evidence="1">Tryptophan synthase beta chain</fullName>
        <ecNumber evidence="1">4.2.1.20</ecNumber>
    </recommendedName>
</protein>